<evidence type="ECO:0000255" key="1">
    <source>
        <dbReference type="HAMAP-Rule" id="MF_01208"/>
    </source>
</evidence>
<accession>P0DD68</accession>
<accession>P58857</accession>
<accession>P65919</accession>
<sequence length="209" mass="22771">MTLASQIATQLLDIKAVYLKPEDPFTWASGIKSPIYTDNRVTLSYPKTRDLIENGFVETIRAHFPEVEVIAGTATAGIPHGAIIADKMTLPFAYIRSKPKDHGAGNQIEGRVLKGQKMVIIEDLISTGGSVLDAAAAASREGADVLGVVAIFTYELPKASQNFKEAGIKLITLSNYTELIAVAKLQGYITNDGLHLLKKFKEDQVNWQQ</sequence>
<protein>
    <recommendedName>
        <fullName evidence="1">Orotate phosphoribosyltransferase</fullName>
        <shortName evidence="1">OPRT</shortName>
        <shortName evidence="1">OPRTase</shortName>
        <ecNumber evidence="1">2.4.2.10</ecNumber>
    </recommendedName>
</protein>
<reference key="1">
    <citation type="journal article" date="2002" name="Proc. Natl. Acad. Sci. U.S.A.">
        <title>Genome sequence of a serotype M3 strain of group A Streptococcus: phage-encoded toxins, the high-virulence phenotype, and clone emergence.</title>
        <authorList>
            <person name="Beres S.B."/>
            <person name="Sylva G.L."/>
            <person name="Barbian K.D."/>
            <person name="Lei B."/>
            <person name="Hoff J.S."/>
            <person name="Mammarella N.D."/>
            <person name="Liu M.-Y."/>
            <person name="Smoot J.C."/>
            <person name="Porcella S.F."/>
            <person name="Parkins L.D."/>
            <person name="Campbell D.S."/>
            <person name="Smith T.M."/>
            <person name="McCormick J.K."/>
            <person name="Leung D.Y.M."/>
            <person name="Schlievert P.M."/>
            <person name="Musser J.M."/>
        </authorList>
    </citation>
    <scope>NUCLEOTIDE SEQUENCE [LARGE SCALE GENOMIC DNA]</scope>
    <source>
        <strain>ATCC BAA-595 / MGAS315</strain>
    </source>
</reference>
<keyword id="KW-0328">Glycosyltransferase</keyword>
<keyword id="KW-0460">Magnesium</keyword>
<keyword id="KW-0665">Pyrimidine biosynthesis</keyword>
<keyword id="KW-0808">Transferase</keyword>
<gene>
    <name evidence="1" type="primary">pyrE</name>
    <name type="ordered locus">SpyM3_0617</name>
</gene>
<organism>
    <name type="scientific">Streptococcus pyogenes serotype M3 (strain ATCC BAA-595 / MGAS315)</name>
    <dbReference type="NCBI Taxonomy" id="198466"/>
    <lineage>
        <taxon>Bacteria</taxon>
        <taxon>Bacillati</taxon>
        <taxon>Bacillota</taxon>
        <taxon>Bacilli</taxon>
        <taxon>Lactobacillales</taxon>
        <taxon>Streptococcaceae</taxon>
        <taxon>Streptococcus</taxon>
    </lineage>
</organism>
<feature type="chain" id="PRO_0000110754" description="Orotate phosphoribosyltransferase">
    <location>
        <begin position="1"/>
        <end position="209"/>
    </location>
</feature>
<feature type="binding site" evidence="1">
    <location>
        <position position="96"/>
    </location>
    <ligand>
        <name>5-phospho-alpha-D-ribose 1-diphosphate</name>
        <dbReference type="ChEBI" id="CHEBI:58017"/>
        <note>ligand shared between dimeric partners</note>
    </ligand>
</feature>
<feature type="binding site" evidence="1">
    <location>
        <position position="100"/>
    </location>
    <ligand>
        <name>5-phospho-alpha-D-ribose 1-diphosphate</name>
        <dbReference type="ChEBI" id="CHEBI:58017"/>
        <note>ligand shared between dimeric partners</note>
    </ligand>
</feature>
<feature type="binding site" evidence="1">
    <location>
        <position position="102"/>
    </location>
    <ligand>
        <name>5-phospho-alpha-D-ribose 1-diphosphate</name>
        <dbReference type="ChEBI" id="CHEBI:58017"/>
        <note>ligand shared between dimeric partners</note>
    </ligand>
</feature>
<feature type="binding site" description="in other chain" evidence="1">
    <location>
        <begin position="122"/>
        <end position="130"/>
    </location>
    <ligand>
        <name>5-phospho-alpha-D-ribose 1-diphosphate</name>
        <dbReference type="ChEBI" id="CHEBI:58017"/>
        <note>ligand shared between dimeric partners</note>
    </ligand>
</feature>
<feature type="binding site" evidence="1">
    <location>
        <position position="126"/>
    </location>
    <ligand>
        <name>orotate</name>
        <dbReference type="ChEBI" id="CHEBI:30839"/>
    </ligand>
</feature>
<name>PYRE_STRP3</name>
<dbReference type="EC" id="2.4.2.10" evidence="1"/>
<dbReference type="EMBL" id="AE014074">
    <property type="protein sequence ID" value="AAM79224.1"/>
    <property type="molecule type" value="Genomic_DNA"/>
</dbReference>
<dbReference type="RefSeq" id="WP_002984920.1">
    <property type="nucleotide sequence ID" value="NC_004070.1"/>
</dbReference>
<dbReference type="SMR" id="P0DD68"/>
<dbReference type="GeneID" id="69900997"/>
<dbReference type="KEGG" id="spg:SpyM3_0617"/>
<dbReference type="HOGENOM" id="CLU_074878_1_1_9"/>
<dbReference type="UniPathway" id="UPA00070">
    <property type="reaction ID" value="UER00119"/>
</dbReference>
<dbReference type="Proteomes" id="UP000000564">
    <property type="component" value="Chromosome"/>
</dbReference>
<dbReference type="GO" id="GO:0000287">
    <property type="term" value="F:magnesium ion binding"/>
    <property type="evidence" value="ECO:0007669"/>
    <property type="project" value="UniProtKB-UniRule"/>
</dbReference>
<dbReference type="GO" id="GO:0004588">
    <property type="term" value="F:orotate phosphoribosyltransferase activity"/>
    <property type="evidence" value="ECO:0007669"/>
    <property type="project" value="UniProtKB-UniRule"/>
</dbReference>
<dbReference type="GO" id="GO:0044205">
    <property type="term" value="P:'de novo' UMP biosynthetic process"/>
    <property type="evidence" value="ECO:0007669"/>
    <property type="project" value="UniProtKB-UniRule"/>
</dbReference>
<dbReference type="GO" id="GO:0019856">
    <property type="term" value="P:pyrimidine nucleobase biosynthetic process"/>
    <property type="evidence" value="ECO:0007669"/>
    <property type="project" value="TreeGrafter"/>
</dbReference>
<dbReference type="CDD" id="cd06223">
    <property type="entry name" value="PRTases_typeI"/>
    <property type="match status" value="1"/>
</dbReference>
<dbReference type="Gene3D" id="3.40.50.2020">
    <property type="match status" value="1"/>
</dbReference>
<dbReference type="HAMAP" id="MF_01208">
    <property type="entry name" value="PyrE"/>
    <property type="match status" value="1"/>
</dbReference>
<dbReference type="InterPro" id="IPR023031">
    <property type="entry name" value="OPRT"/>
</dbReference>
<dbReference type="InterPro" id="IPR004467">
    <property type="entry name" value="Or_phspho_trans_dom"/>
</dbReference>
<dbReference type="InterPro" id="IPR000836">
    <property type="entry name" value="PRibTrfase_dom"/>
</dbReference>
<dbReference type="InterPro" id="IPR029057">
    <property type="entry name" value="PRTase-like"/>
</dbReference>
<dbReference type="NCBIfam" id="TIGR00336">
    <property type="entry name" value="pyrE"/>
    <property type="match status" value="1"/>
</dbReference>
<dbReference type="PANTHER" id="PTHR19278">
    <property type="entry name" value="OROTATE PHOSPHORIBOSYLTRANSFERASE"/>
    <property type="match status" value="1"/>
</dbReference>
<dbReference type="PANTHER" id="PTHR19278:SF9">
    <property type="entry name" value="URIDINE 5'-MONOPHOSPHATE SYNTHASE"/>
    <property type="match status" value="1"/>
</dbReference>
<dbReference type="Pfam" id="PF00156">
    <property type="entry name" value="Pribosyltran"/>
    <property type="match status" value="1"/>
</dbReference>
<dbReference type="SUPFAM" id="SSF53271">
    <property type="entry name" value="PRTase-like"/>
    <property type="match status" value="1"/>
</dbReference>
<dbReference type="PROSITE" id="PS00103">
    <property type="entry name" value="PUR_PYR_PR_TRANSFER"/>
    <property type="match status" value="1"/>
</dbReference>
<proteinExistence type="inferred from homology"/>
<comment type="function">
    <text evidence="1">Catalyzes the transfer of a ribosyl phosphate group from 5-phosphoribose 1-diphosphate to orotate, leading to the formation of orotidine monophosphate (OMP).</text>
</comment>
<comment type="catalytic activity">
    <reaction evidence="1">
        <text>orotidine 5'-phosphate + diphosphate = orotate + 5-phospho-alpha-D-ribose 1-diphosphate</text>
        <dbReference type="Rhea" id="RHEA:10380"/>
        <dbReference type="ChEBI" id="CHEBI:30839"/>
        <dbReference type="ChEBI" id="CHEBI:33019"/>
        <dbReference type="ChEBI" id="CHEBI:57538"/>
        <dbReference type="ChEBI" id="CHEBI:58017"/>
        <dbReference type="EC" id="2.4.2.10"/>
    </reaction>
</comment>
<comment type="cofactor">
    <cofactor evidence="1">
        <name>Mg(2+)</name>
        <dbReference type="ChEBI" id="CHEBI:18420"/>
    </cofactor>
</comment>
<comment type="pathway">
    <text evidence="1">Pyrimidine metabolism; UMP biosynthesis via de novo pathway; UMP from orotate: step 1/2.</text>
</comment>
<comment type="subunit">
    <text evidence="1">Homodimer.</text>
</comment>
<comment type="similarity">
    <text evidence="1">Belongs to the purine/pyrimidine phosphoribosyltransferase family. PyrE subfamily.</text>
</comment>